<dbReference type="EMBL" id="CP000261">
    <property type="protein sequence ID" value="ABF36890.1"/>
    <property type="molecule type" value="Genomic_DNA"/>
</dbReference>
<dbReference type="SMR" id="Q1J9C1"/>
<dbReference type="KEGG" id="spj:MGAS2096_Spy1838"/>
<dbReference type="HOGENOM" id="CLU_002472_3_1_9"/>
<dbReference type="GO" id="GO:0005829">
    <property type="term" value="C:cytosol"/>
    <property type="evidence" value="ECO:0007669"/>
    <property type="project" value="TreeGrafter"/>
</dbReference>
<dbReference type="GO" id="GO:0005524">
    <property type="term" value="F:ATP binding"/>
    <property type="evidence" value="ECO:0007669"/>
    <property type="project" value="UniProtKB-UniRule"/>
</dbReference>
<dbReference type="GO" id="GO:0140664">
    <property type="term" value="F:ATP-dependent DNA damage sensor activity"/>
    <property type="evidence" value="ECO:0007669"/>
    <property type="project" value="InterPro"/>
</dbReference>
<dbReference type="GO" id="GO:0003684">
    <property type="term" value="F:damaged DNA binding"/>
    <property type="evidence" value="ECO:0007669"/>
    <property type="project" value="UniProtKB-UniRule"/>
</dbReference>
<dbReference type="GO" id="GO:0030983">
    <property type="term" value="F:mismatched DNA binding"/>
    <property type="evidence" value="ECO:0007669"/>
    <property type="project" value="InterPro"/>
</dbReference>
<dbReference type="GO" id="GO:0006298">
    <property type="term" value="P:mismatch repair"/>
    <property type="evidence" value="ECO:0007669"/>
    <property type="project" value="UniProtKB-UniRule"/>
</dbReference>
<dbReference type="CDD" id="cd03284">
    <property type="entry name" value="ABC_MutS1"/>
    <property type="match status" value="1"/>
</dbReference>
<dbReference type="FunFam" id="1.10.1420.10:FF:000001">
    <property type="entry name" value="DNA mismatch repair protein MutS"/>
    <property type="match status" value="1"/>
</dbReference>
<dbReference type="FunFam" id="3.40.1170.10:FF:000001">
    <property type="entry name" value="DNA mismatch repair protein MutS"/>
    <property type="match status" value="1"/>
</dbReference>
<dbReference type="FunFam" id="3.40.50.300:FF:000896">
    <property type="entry name" value="DNA mismatch repair protein MutS"/>
    <property type="match status" value="1"/>
</dbReference>
<dbReference type="Gene3D" id="1.10.1420.10">
    <property type="match status" value="2"/>
</dbReference>
<dbReference type="Gene3D" id="3.40.1170.10">
    <property type="entry name" value="DNA repair protein MutS, domain I"/>
    <property type="match status" value="1"/>
</dbReference>
<dbReference type="Gene3D" id="3.30.420.110">
    <property type="entry name" value="MutS, connector domain"/>
    <property type="match status" value="1"/>
</dbReference>
<dbReference type="Gene3D" id="3.40.50.300">
    <property type="entry name" value="P-loop containing nucleotide triphosphate hydrolases"/>
    <property type="match status" value="1"/>
</dbReference>
<dbReference type="HAMAP" id="MF_00096">
    <property type="entry name" value="MutS"/>
    <property type="match status" value="1"/>
</dbReference>
<dbReference type="InterPro" id="IPR005748">
    <property type="entry name" value="DNA_mismatch_repair_MutS"/>
</dbReference>
<dbReference type="InterPro" id="IPR007695">
    <property type="entry name" value="DNA_mismatch_repair_MutS-lik_N"/>
</dbReference>
<dbReference type="InterPro" id="IPR017261">
    <property type="entry name" value="DNA_mismatch_repair_MutS/MSH"/>
</dbReference>
<dbReference type="InterPro" id="IPR000432">
    <property type="entry name" value="DNA_mismatch_repair_MutS_C"/>
</dbReference>
<dbReference type="InterPro" id="IPR007861">
    <property type="entry name" value="DNA_mismatch_repair_MutS_clamp"/>
</dbReference>
<dbReference type="InterPro" id="IPR007696">
    <property type="entry name" value="DNA_mismatch_repair_MutS_core"/>
</dbReference>
<dbReference type="InterPro" id="IPR016151">
    <property type="entry name" value="DNA_mismatch_repair_MutS_N"/>
</dbReference>
<dbReference type="InterPro" id="IPR036187">
    <property type="entry name" value="DNA_mismatch_repair_MutS_sf"/>
</dbReference>
<dbReference type="InterPro" id="IPR007860">
    <property type="entry name" value="DNA_mmatch_repair_MutS_con_dom"/>
</dbReference>
<dbReference type="InterPro" id="IPR045076">
    <property type="entry name" value="MutS"/>
</dbReference>
<dbReference type="InterPro" id="IPR036678">
    <property type="entry name" value="MutS_con_dom_sf"/>
</dbReference>
<dbReference type="InterPro" id="IPR027417">
    <property type="entry name" value="P-loop_NTPase"/>
</dbReference>
<dbReference type="NCBIfam" id="TIGR01070">
    <property type="entry name" value="mutS1"/>
    <property type="match status" value="1"/>
</dbReference>
<dbReference type="NCBIfam" id="NF003810">
    <property type="entry name" value="PRK05399.1"/>
    <property type="match status" value="1"/>
</dbReference>
<dbReference type="PANTHER" id="PTHR11361:SF34">
    <property type="entry name" value="DNA MISMATCH REPAIR PROTEIN MSH1, MITOCHONDRIAL"/>
    <property type="match status" value="1"/>
</dbReference>
<dbReference type="PANTHER" id="PTHR11361">
    <property type="entry name" value="DNA MISMATCH REPAIR PROTEIN MUTS FAMILY MEMBER"/>
    <property type="match status" value="1"/>
</dbReference>
<dbReference type="Pfam" id="PF01624">
    <property type="entry name" value="MutS_I"/>
    <property type="match status" value="1"/>
</dbReference>
<dbReference type="Pfam" id="PF05188">
    <property type="entry name" value="MutS_II"/>
    <property type="match status" value="1"/>
</dbReference>
<dbReference type="Pfam" id="PF05192">
    <property type="entry name" value="MutS_III"/>
    <property type="match status" value="1"/>
</dbReference>
<dbReference type="Pfam" id="PF05190">
    <property type="entry name" value="MutS_IV"/>
    <property type="match status" value="1"/>
</dbReference>
<dbReference type="Pfam" id="PF00488">
    <property type="entry name" value="MutS_V"/>
    <property type="match status" value="1"/>
</dbReference>
<dbReference type="PIRSF" id="PIRSF037677">
    <property type="entry name" value="DNA_mis_repair_Msh6"/>
    <property type="match status" value="1"/>
</dbReference>
<dbReference type="SMART" id="SM00534">
    <property type="entry name" value="MUTSac"/>
    <property type="match status" value="1"/>
</dbReference>
<dbReference type="SMART" id="SM00533">
    <property type="entry name" value="MUTSd"/>
    <property type="match status" value="1"/>
</dbReference>
<dbReference type="SUPFAM" id="SSF55271">
    <property type="entry name" value="DNA repair protein MutS, domain I"/>
    <property type="match status" value="1"/>
</dbReference>
<dbReference type="SUPFAM" id="SSF53150">
    <property type="entry name" value="DNA repair protein MutS, domain II"/>
    <property type="match status" value="1"/>
</dbReference>
<dbReference type="SUPFAM" id="SSF48334">
    <property type="entry name" value="DNA repair protein MutS, domain III"/>
    <property type="match status" value="1"/>
</dbReference>
<dbReference type="SUPFAM" id="SSF52540">
    <property type="entry name" value="P-loop containing nucleoside triphosphate hydrolases"/>
    <property type="match status" value="1"/>
</dbReference>
<dbReference type="PROSITE" id="PS00486">
    <property type="entry name" value="DNA_MISMATCH_REPAIR_2"/>
    <property type="match status" value="1"/>
</dbReference>
<feature type="chain" id="PRO_1000008107" description="DNA mismatch repair protein MutS">
    <location>
        <begin position="1"/>
        <end position="851"/>
    </location>
</feature>
<feature type="binding site" evidence="1">
    <location>
        <begin position="602"/>
        <end position="609"/>
    </location>
    <ligand>
        <name>ATP</name>
        <dbReference type="ChEBI" id="CHEBI:30616"/>
    </ligand>
</feature>
<name>MUTS_STRPB</name>
<organism>
    <name type="scientific">Streptococcus pyogenes serotype M12 (strain MGAS2096)</name>
    <dbReference type="NCBI Taxonomy" id="370553"/>
    <lineage>
        <taxon>Bacteria</taxon>
        <taxon>Bacillati</taxon>
        <taxon>Bacillota</taxon>
        <taxon>Bacilli</taxon>
        <taxon>Lactobacillales</taxon>
        <taxon>Streptococcaceae</taxon>
        <taxon>Streptococcus</taxon>
    </lineage>
</organism>
<reference key="1">
    <citation type="journal article" date="2006" name="Proc. Natl. Acad. Sci. U.S.A.">
        <title>Molecular genetic anatomy of inter- and intraserotype variation in the human bacterial pathogen group A Streptococcus.</title>
        <authorList>
            <person name="Beres S.B."/>
            <person name="Richter E.W."/>
            <person name="Nagiec M.J."/>
            <person name="Sumby P."/>
            <person name="Porcella S.F."/>
            <person name="DeLeo F.R."/>
            <person name="Musser J.M."/>
        </authorList>
    </citation>
    <scope>NUCLEOTIDE SEQUENCE [LARGE SCALE GENOMIC DNA]</scope>
    <source>
        <strain>MGAS2096</strain>
    </source>
</reference>
<accession>Q1J9C1</accession>
<protein>
    <recommendedName>
        <fullName evidence="1">DNA mismatch repair protein MutS</fullName>
    </recommendedName>
</protein>
<evidence type="ECO:0000255" key="1">
    <source>
        <dbReference type="HAMAP-Rule" id="MF_00096"/>
    </source>
</evidence>
<keyword id="KW-0067">ATP-binding</keyword>
<keyword id="KW-0227">DNA damage</keyword>
<keyword id="KW-0234">DNA repair</keyword>
<keyword id="KW-0238">DNA-binding</keyword>
<keyword id="KW-0547">Nucleotide-binding</keyword>
<gene>
    <name evidence="1" type="primary">mutS</name>
    <name type="ordered locus">MGAS2096_Spy1838</name>
</gene>
<comment type="function">
    <text evidence="1">This protein is involved in the repair of mismatches in DNA. It is possible that it carries out the mismatch recognition step. This protein has a weak ATPase activity.</text>
</comment>
<comment type="similarity">
    <text evidence="1">Belongs to the DNA mismatch repair MutS family.</text>
</comment>
<proteinExistence type="inferred from homology"/>
<sequence>MTKTNISPGMQQYLDIKKDYPDAFLLFRMGDFYELFYEDAVKAAQLLEIGLTSRNKNAENPIPMAGVPHHSAQQYIDVLIELGYKVAVAEQMEDPKQAVGVVKREVVQVITPGTVVDSAKPDSANNFLVAVDFDGCRYGLAYMDVSTGEFCVTDLADFTSVRSEIQNLKAKEVLLGFDLSEEEQTILVKQMNLLLSYEETVYEDKSLIDGQLTTVELTAAGKLLQYVHKTQMRELSHLQALVHYEIKDYLQMSYATKSSLDLVENARTNKKHGSLYWLLDETKTAMGMRLLRSWIDRPLVSKEAILERQEIIQVFLNAFIERTDLSNSLKGVYDIERLSSRVSFGKANPKDLLQLGYTLAQVPYIKAILESFDSPCVDKLVNDIDSLPELEYLIRTAIDPDAPATISEGSIIRTGFDERLDHYRKVMREGTGWIADIEAKERQESGINNLKIDYNKKDGYYFHVTNSNLSLVPEHFFRKATLKNSERYGTAELAKIEGQMLEAREESSSLEYDIFMCIRAQVETYINRLQKLAKTLATVDVLQSLAVVAETNHYIRPQFNDNHVITIQEGRHAVVEKVMGVQEYIPNSISFDQQTSIQLITGPNMSGKSTYMRQLALTVIMAQMGSFVAADHVDLPLFDAIFTRIGAADDLISGQSTFMVEMMEANQAIKRASDNSLILFDELGRGTATYDGMALAQAIIEYIHDRVGAKTIFATHYHELTDLSTKLTSLVNVHVATLEKDGDVTFLHKIAEGPADKSYGIHVAKIAGLPKSLLKRADEVLTRLETQSRSTEIMSVPPQVESSSAVRQGQLSLFGDDEKAHEIRQALEAIDVMNMTPFQAMTTLYELKKLL</sequence>